<protein>
    <recommendedName>
        <fullName evidence="1">Pyridoxine/pyridoxamine 5'-phosphate oxidase</fullName>
        <ecNumber evidence="1">1.4.3.5</ecNumber>
    </recommendedName>
    <alternativeName>
        <fullName evidence="1">PNP/PMP oxidase</fullName>
        <shortName evidence="1">PNPOx</shortName>
    </alternativeName>
    <alternativeName>
        <fullName evidence="1">Pyridoxal 5'-phosphate synthase</fullName>
    </alternativeName>
</protein>
<dbReference type="EC" id="1.4.3.5" evidence="1"/>
<dbReference type="EMBL" id="AM039952">
    <property type="protein sequence ID" value="CAJ24890.1"/>
    <property type="molecule type" value="Genomic_DNA"/>
</dbReference>
<dbReference type="RefSeq" id="WP_008571714.1">
    <property type="nucleotide sequence ID" value="NZ_CP017190.1"/>
</dbReference>
<dbReference type="SMR" id="Q3BQS3"/>
<dbReference type="STRING" id="456327.BJD11_07015"/>
<dbReference type="GeneID" id="97511287"/>
<dbReference type="KEGG" id="xcv:XCV3159"/>
<dbReference type="eggNOG" id="COG0259">
    <property type="taxonomic scope" value="Bacteria"/>
</dbReference>
<dbReference type="HOGENOM" id="CLU_032263_2_3_6"/>
<dbReference type="UniPathway" id="UPA01068">
    <property type="reaction ID" value="UER00304"/>
</dbReference>
<dbReference type="UniPathway" id="UPA01068">
    <property type="reaction ID" value="UER00305"/>
</dbReference>
<dbReference type="Proteomes" id="UP000007069">
    <property type="component" value="Chromosome"/>
</dbReference>
<dbReference type="GO" id="GO:0010181">
    <property type="term" value="F:FMN binding"/>
    <property type="evidence" value="ECO:0007669"/>
    <property type="project" value="UniProtKB-UniRule"/>
</dbReference>
<dbReference type="GO" id="GO:0004733">
    <property type="term" value="F:pyridoxamine phosphate oxidase activity"/>
    <property type="evidence" value="ECO:0007669"/>
    <property type="project" value="UniProtKB-UniRule"/>
</dbReference>
<dbReference type="GO" id="GO:0008615">
    <property type="term" value="P:pyridoxine biosynthetic process"/>
    <property type="evidence" value="ECO:0007669"/>
    <property type="project" value="UniProtKB-KW"/>
</dbReference>
<dbReference type="FunFam" id="2.30.110.10:FF:000012">
    <property type="entry name" value="Predicted protein"/>
    <property type="match status" value="1"/>
</dbReference>
<dbReference type="Gene3D" id="2.30.110.10">
    <property type="entry name" value="Electron Transport, Fmn-binding Protein, Chain A"/>
    <property type="match status" value="1"/>
</dbReference>
<dbReference type="HAMAP" id="MF_01629">
    <property type="entry name" value="PdxH"/>
    <property type="match status" value="1"/>
</dbReference>
<dbReference type="InterPro" id="IPR000659">
    <property type="entry name" value="Pyridox_Oxase"/>
</dbReference>
<dbReference type="InterPro" id="IPR019740">
    <property type="entry name" value="Pyridox_Oxase_CS"/>
</dbReference>
<dbReference type="InterPro" id="IPR011576">
    <property type="entry name" value="Pyridox_Oxase_N"/>
</dbReference>
<dbReference type="InterPro" id="IPR019576">
    <property type="entry name" value="Pyridoxamine_oxidase_dimer_C"/>
</dbReference>
<dbReference type="InterPro" id="IPR012349">
    <property type="entry name" value="Split_barrel_FMN-bd"/>
</dbReference>
<dbReference type="NCBIfam" id="TIGR00558">
    <property type="entry name" value="pdxH"/>
    <property type="match status" value="1"/>
</dbReference>
<dbReference type="NCBIfam" id="NF004231">
    <property type="entry name" value="PRK05679.1"/>
    <property type="match status" value="1"/>
</dbReference>
<dbReference type="PANTHER" id="PTHR10851:SF0">
    <property type="entry name" value="PYRIDOXINE-5'-PHOSPHATE OXIDASE"/>
    <property type="match status" value="1"/>
</dbReference>
<dbReference type="PANTHER" id="PTHR10851">
    <property type="entry name" value="PYRIDOXINE-5-PHOSPHATE OXIDASE"/>
    <property type="match status" value="1"/>
</dbReference>
<dbReference type="Pfam" id="PF10590">
    <property type="entry name" value="PNP_phzG_C"/>
    <property type="match status" value="1"/>
</dbReference>
<dbReference type="Pfam" id="PF01243">
    <property type="entry name" value="PNPOx_N"/>
    <property type="match status" value="1"/>
</dbReference>
<dbReference type="PIRSF" id="PIRSF000190">
    <property type="entry name" value="Pyd_amn-ph_oxd"/>
    <property type="match status" value="1"/>
</dbReference>
<dbReference type="SUPFAM" id="SSF50475">
    <property type="entry name" value="FMN-binding split barrel"/>
    <property type="match status" value="1"/>
</dbReference>
<dbReference type="PROSITE" id="PS01064">
    <property type="entry name" value="PYRIDOX_OXIDASE"/>
    <property type="match status" value="1"/>
</dbReference>
<proteinExistence type="inferred from homology"/>
<evidence type="ECO:0000255" key="1">
    <source>
        <dbReference type="HAMAP-Rule" id="MF_01629"/>
    </source>
</evidence>
<sequence>MTDLYAEALATFAALYAEAQNSAEPEASAMTVATANVDGRPSARTVLLKAFDARGFVFYTHLDSAKGRDLQTHPQAALLFLWRSLREAGIQVRIEGGVQLVSADESDAYFASRPRMSQIGAWASRQSQTLGSREEFDAAIAKVEATFEGREVPRPDGWGGFRVVPQAFEFWYGAKFRLHERWRYEADAASHWSKRMLYP</sequence>
<reference key="1">
    <citation type="journal article" date="2005" name="J. Bacteriol.">
        <title>Insights into genome plasticity and pathogenicity of the plant pathogenic Bacterium Xanthomonas campestris pv. vesicatoria revealed by the complete genome sequence.</title>
        <authorList>
            <person name="Thieme F."/>
            <person name="Koebnik R."/>
            <person name="Bekel T."/>
            <person name="Berger C."/>
            <person name="Boch J."/>
            <person name="Buettner D."/>
            <person name="Caldana C."/>
            <person name="Gaigalat L."/>
            <person name="Goesmann A."/>
            <person name="Kay S."/>
            <person name="Kirchner O."/>
            <person name="Lanz C."/>
            <person name="Linke B."/>
            <person name="McHardy A.C."/>
            <person name="Meyer F."/>
            <person name="Mittenhuber G."/>
            <person name="Nies D.H."/>
            <person name="Niesbach-Kloesgen U."/>
            <person name="Patschkowski T."/>
            <person name="Rueckert C."/>
            <person name="Rupp O."/>
            <person name="Schneiker S."/>
            <person name="Schuster S.C."/>
            <person name="Vorhoelter F.J."/>
            <person name="Weber E."/>
            <person name="Puehler A."/>
            <person name="Bonas U."/>
            <person name="Bartels D."/>
            <person name="Kaiser O."/>
        </authorList>
    </citation>
    <scope>NUCLEOTIDE SEQUENCE [LARGE SCALE GENOMIC DNA]</scope>
    <source>
        <strain>85-10</strain>
    </source>
</reference>
<accession>Q3BQS3</accession>
<keyword id="KW-0285">Flavoprotein</keyword>
<keyword id="KW-0288">FMN</keyword>
<keyword id="KW-0560">Oxidoreductase</keyword>
<keyword id="KW-0664">Pyridoxine biosynthesis</keyword>
<comment type="function">
    <text evidence="1">Catalyzes the oxidation of either pyridoxine 5'-phosphate (PNP) or pyridoxamine 5'-phosphate (PMP) into pyridoxal 5'-phosphate (PLP).</text>
</comment>
<comment type="catalytic activity">
    <reaction evidence="1">
        <text>pyridoxamine 5'-phosphate + O2 + H2O = pyridoxal 5'-phosphate + H2O2 + NH4(+)</text>
        <dbReference type="Rhea" id="RHEA:15817"/>
        <dbReference type="ChEBI" id="CHEBI:15377"/>
        <dbReference type="ChEBI" id="CHEBI:15379"/>
        <dbReference type="ChEBI" id="CHEBI:16240"/>
        <dbReference type="ChEBI" id="CHEBI:28938"/>
        <dbReference type="ChEBI" id="CHEBI:58451"/>
        <dbReference type="ChEBI" id="CHEBI:597326"/>
        <dbReference type="EC" id="1.4.3.5"/>
    </reaction>
</comment>
<comment type="catalytic activity">
    <reaction evidence="1">
        <text>pyridoxine 5'-phosphate + O2 = pyridoxal 5'-phosphate + H2O2</text>
        <dbReference type="Rhea" id="RHEA:15149"/>
        <dbReference type="ChEBI" id="CHEBI:15379"/>
        <dbReference type="ChEBI" id="CHEBI:16240"/>
        <dbReference type="ChEBI" id="CHEBI:58589"/>
        <dbReference type="ChEBI" id="CHEBI:597326"/>
        <dbReference type="EC" id="1.4.3.5"/>
    </reaction>
</comment>
<comment type="cofactor">
    <cofactor evidence="1">
        <name>FMN</name>
        <dbReference type="ChEBI" id="CHEBI:58210"/>
    </cofactor>
    <text evidence="1">Binds 1 FMN per subunit.</text>
</comment>
<comment type="pathway">
    <text evidence="1">Cofactor metabolism; pyridoxal 5'-phosphate salvage; pyridoxal 5'-phosphate from pyridoxamine 5'-phosphate: step 1/1.</text>
</comment>
<comment type="pathway">
    <text evidence="1">Cofactor metabolism; pyridoxal 5'-phosphate salvage; pyridoxal 5'-phosphate from pyridoxine 5'-phosphate: step 1/1.</text>
</comment>
<comment type="subunit">
    <text evidence="1">Homodimer.</text>
</comment>
<comment type="similarity">
    <text evidence="1">Belongs to the pyridoxamine 5'-phosphate oxidase family.</text>
</comment>
<name>PDXH_XANE5</name>
<gene>
    <name evidence="1" type="primary">pdxH</name>
    <name type="ordered locus">XCV3159</name>
</gene>
<organism>
    <name type="scientific">Xanthomonas euvesicatoria pv. vesicatoria (strain 85-10)</name>
    <name type="common">Xanthomonas campestris pv. vesicatoria</name>
    <dbReference type="NCBI Taxonomy" id="316273"/>
    <lineage>
        <taxon>Bacteria</taxon>
        <taxon>Pseudomonadati</taxon>
        <taxon>Pseudomonadota</taxon>
        <taxon>Gammaproteobacteria</taxon>
        <taxon>Lysobacterales</taxon>
        <taxon>Lysobacteraceae</taxon>
        <taxon>Xanthomonas</taxon>
    </lineage>
</organism>
<feature type="chain" id="PRO_0000167775" description="Pyridoxine/pyridoxamine 5'-phosphate oxidase">
    <location>
        <begin position="1"/>
        <end position="199"/>
    </location>
</feature>
<feature type="binding site" evidence="1">
    <location>
        <begin position="44"/>
        <end position="49"/>
    </location>
    <ligand>
        <name>FMN</name>
        <dbReference type="ChEBI" id="CHEBI:58210"/>
    </ligand>
</feature>
<feature type="binding site" evidence="1">
    <location>
        <position position="49"/>
    </location>
    <ligand>
        <name>substrate</name>
    </ligand>
</feature>
<feature type="binding site" evidence="1">
    <location>
        <begin position="59"/>
        <end position="60"/>
    </location>
    <ligand>
        <name>FMN</name>
        <dbReference type="ChEBI" id="CHEBI:58210"/>
    </ligand>
</feature>
<feature type="binding site" evidence="1">
    <location>
        <position position="66"/>
    </location>
    <ligand>
        <name>FMN</name>
        <dbReference type="ChEBI" id="CHEBI:58210"/>
    </ligand>
</feature>
<feature type="binding site" evidence="1">
    <location>
        <position position="91"/>
    </location>
    <ligand>
        <name>FMN</name>
        <dbReference type="ChEBI" id="CHEBI:58210"/>
    </ligand>
</feature>
<feature type="binding site" evidence="1">
    <location>
        <position position="109"/>
    </location>
    <ligand>
        <name>substrate</name>
    </ligand>
</feature>
<feature type="binding site" evidence="1">
    <location>
        <position position="113"/>
    </location>
    <ligand>
        <name>substrate</name>
    </ligand>
</feature>
<feature type="binding site" evidence="1">
    <location>
        <position position="117"/>
    </location>
    <ligand>
        <name>substrate</name>
    </ligand>
</feature>
<feature type="binding site" evidence="1">
    <location>
        <begin position="126"/>
        <end position="127"/>
    </location>
    <ligand>
        <name>FMN</name>
        <dbReference type="ChEBI" id="CHEBI:58210"/>
    </ligand>
</feature>
<feature type="binding site" evidence="1">
    <location>
        <position position="171"/>
    </location>
    <ligand>
        <name>FMN</name>
        <dbReference type="ChEBI" id="CHEBI:58210"/>
    </ligand>
</feature>
<feature type="binding site" evidence="1">
    <location>
        <begin position="177"/>
        <end position="179"/>
    </location>
    <ligand>
        <name>substrate</name>
    </ligand>
</feature>
<feature type="binding site" evidence="1">
    <location>
        <position position="181"/>
    </location>
    <ligand>
        <name>FMN</name>
        <dbReference type="ChEBI" id="CHEBI:58210"/>
    </ligand>
</feature>